<accession>A3NED9</accession>
<proteinExistence type="inferred from homology"/>
<feature type="chain" id="PRO_1000010920" description="Iron-sulfur cluster assembly protein CyaY">
    <location>
        <begin position="1"/>
        <end position="108"/>
    </location>
</feature>
<protein>
    <recommendedName>
        <fullName evidence="1">Iron-sulfur cluster assembly protein CyaY</fullName>
    </recommendedName>
</protein>
<reference key="1">
    <citation type="journal article" date="2010" name="Genome Biol. Evol.">
        <title>Continuing evolution of Burkholderia mallei through genome reduction and large-scale rearrangements.</title>
        <authorList>
            <person name="Losada L."/>
            <person name="Ronning C.M."/>
            <person name="DeShazer D."/>
            <person name="Woods D."/>
            <person name="Fedorova N."/>
            <person name="Kim H.S."/>
            <person name="Shabalina S.A."/>
            <person name="Pearson T.R."/>
            <person name="Brinkac L."/>
            <person name="Tan P."/>
            <person name="Nandi T."/>
            <person name="Crabtree J."/>
            <person name="Badger J."/>
            <person name="Beckstrom-Sternberg S."/>
            <person name="Saqib M."/>
            <person name="Schutzer S.E."/>
            <person name="Keim P."/>
            <person name="Nierman W.C."/>
        </authorList>
    </citation>
    <scope>NUCLEOTIDE SEQUENCE [LARGE SCALE GENOMIC DNA]</scope>
    <source>
        <strain>668</strain>
    </source>
</reference>
<sequence>MSDTDYLTRAEAVLAAVERSVDAANDGDADIDLERNGSVLTLTFENGSKIIVNLQPPMKEVWIAAKAGGFHYRFVDGAWRDTRSGDEFFAALTGYATQQAGMPIAFSA</sequence>
<name>CYAY_BURP6</name>
<evidence type="ECO:0000255" key="1">
    <source>
        <dbReference type="HAMAP-Rule" id="MF_00142"/>
    </source>
</evidence>
<comment type="function">
    <text evidence="1">Involved in iron-sulfur (Fe-S) cluster assembly. May act as a regulator of Fe-S biogenesis.</text>
</comment>
<comment type="similarity">
    <text evidence="1">Belongs to the frataxin family.</text>
</comment>
<dbReference type="EMBL" id="CP000570">
    <property type="protein sequence ID" value="ABN84350.1"/>
    <property type="molecule type" value="Genomic_DNA"/>
</dbReference>
<dbReference type="RefSeq" id="WP_004196764.1">
    <property type="nucleotide sequence ID" value="NC_009074.1"/>
</dbReference>
<dbReference type="SMR" id="A3NED9"/>
<dbReference type="GeneID" id="93061793"/>
<dbReference type="KEGG" id="bpd:BURPS668_3706"/>
<dbReference type="HOGENOM" id="CLU_080880_3_0_4"/>
<dbReference type="GO" id="GO:0005829">
    <property type="term" value="C:cytosol"/>
    <property type="evidence" value="ECO:0007669"/>
    <property type="project" value="TreeGrafter"/>
</dbReference>
<dbReference type="GO" id="GO:0008199">
    <property type="term" value="F:ferric iron binding"/>
    <property type="evidence" value="ECO:0007669"/>
    <property type="project" value="InterPro"/>
</dbReference>
<dbReference type="GO" id="GO:0008198">
    <property type="term" value="F:ferrous iron binding"/>
    <property type="evidence" value="ECO:0007669"/>
    <property type="project" value="TreeGrafter"/>
</dbReference>
<dbReference type="GO" id="GO:0016226">
    <property type="term" value="P:iron-sulfur cluster assembly"/>
    <property type="evidence" value="ECO:0007669"/>
    <property type="project" value="UniProtKB-UniRule"/>
</dbReference>
<dbReference type="CDD" id="cd00503">
    <property type="entry name" value="Frataxin"/>
    <property type="match status" value="1"/>
</dbReference>
<dbReference type="Gene3D" id="3.30.920.10">
    <property type="entry name" value="Frataxin/CyaY"/>
    <property type="match status" value="1"/>
</dbReference>
<dbReference type="HAMAP" id="MF_00142">
    <property type="entry name" value="CyaY"/>
    <property type="match status" value="1"/>
</dbReference>
<dbReference type="InterPro" id="IPR047584">
    <property type="entry name" value="CyaY"/>
</dbReference>
<dbReference type="InterPro" id="IPR002908">
    <property type="entry name" value="Frataxin/CyaY"/>
</dbReference>
<dbReference type="InterPro" id="IPR036524">
    <property type="entry name" value="Frataxin/CyaY_sf"/>
</dbReference>
<dbReference type="InterPro" id="IPR020895">
    <property type="entry name" value="Frataxin_CS"/>
</dbReference>
<dbReference type="NCBIfam" id="TIGR03421">
    <property type="entry name" value="FeS_CyaY"/>
    <property type="match status" value="1"/>
</dbReference>
<dbReference type="PANTHER" id="PTHR16821">
    <property type="entry name" value="FRATAXIN"/>
    <property type="match status" value="1"/>
</dbReference>
<dbReference type="PANTHER" id="PTHR16821:SF2">
    <property type="entry name" value="FRATAXIN, MITOCHONDRIAL"/>
    <property type="match status" value="1"/>
</dbReference>
<dbReference type="Pfam" id="PF01491">
    <property type="entry name" value="Frataxin_Cyay"/>
    <property type="match status" value="1"/>
</dbReference>
<dbReference type="SMART" id="SM01219">
    <property type="entry name" value="Frataxin_Cyay"/>
    <property type="match status" value="1"/>
</dbReference>
<dbReference type="SUPFAM" id="SSF55387">
    <property type="entry name" value="Frataxin/Nqo15-like"/>
    <property type="match status" value="1"/>
</dbReference>
<dbReference type="PROSITE" id="PS01344">
    <property type="entry name" value="FRATAXIN_1"/>
    <property type="match status" value="1"/>
</dbReference>
<dbReference type="PROSITE" id="PS50810">
    <property type="entry name" value="FRATAXIN_2"/>
    <property type="match status" value="1"/>
</dbReference>
<organism>
    <name type="scientific">Burkholderia pseudomallei (strain 668)</name>
    <dbReference type="NCBI Taxonomy" id="320373"/>
    <lineage>
        <taxon>Bacteria</taxon>
        <taxon>Pseudomonadati</taxon>
        <taxon>Pseudomonadota</taxon>
        <taxon>Betaproteobacteria</taxon>
        <taxon>Burkholderiales</taxon>
        <taxon>Burkholderiaceae</taxon>
        <taxon>Burkholderia</taxon>
        <taxon>pseudomallei group</taxon>
    </lineage>
</organism>
<gene>
    <name evidence="1" type="primary">cyaY</name>
    <name type="ordered locus">BURPS668_3706</name>
</gene>
<keyword id="KW-0408">Iron</keyword>
<keyword id="KW-0479">Metal-binding</keyword>